<comment type="function">
    <text evidence="1">Together with its co-chaperonin GroES, plays an essential role in assisting protein folding. The GroEL-GroES system forms a nano-cage that allows encapsulation of the non-native substrate proteins and provides a physical environment optimized to promote and accelerate protein folding.</text>
</comment>
<comment type="catalytic activity">
    <reaction evidence="1">
        <text>ATP + H2O + a folded polypeptide = ADP + phosphate + an unfolded polypeptide.</text>
        <dbReference type="EC" id="5.6.1.7"/>
    </reaction>
</comment>
<comment type="subunit">
    <text evidence="1">Forms a cylinder of 14 subunits composed of two heptameric rings stacked back-to-back. Interacts with the co-chaperonin GroES.</text>
</comment>
<comment type="subcellular location">
    <subcellularLocation>
        <location evidence="1">Cytoplasm</location>
    </subcellularLocation>
</comment>
<comment type="similarity">
    <text evidence="1">Belongs to the chaperonin (HSP60) family.</text>
</comment>
<feature type="chain" id="PRO_1000129979" description="Chaperonin GroEL">
    <location>
        <begin position="1"/>
        <end position="544"/>
    </location>
</feature>
<feature type="binding site" evidence="1">
    <location>
        <begin position="29"/>
        <end position="32"/>
    </location>
    <ligand>
        <name>ATP</name>
        <dbReference type="ChEBI" id="CHEBI:30616"/>
    </ligand>
</feature>
<feature type="binding site" evidence="1">
    <location>
        <position position="50"/>
    </location>
    <ligand>
        <name>ATP</name>
        <dbReference type="ChEBI" id="CHEBI:30616"/>
    </ligand>
</feature>
<feature type="binding site" evidence="1">
    <location>
        <begin position="86"/>
        <end position="90"/>
    </location>
    <ligand>
        <name>ATP</name>
        <dbReference type="ChEBI" id="CHEBI:30616"/>
    </ligand>
</feature>
<feature type="binding site" evidence="1">
    <location>
        <position position="413"/>
    </location>
    <ligand>
        <name>ATP</name>
        <dbReference type="ChEBI" id="CHEBI:30616"/>
    </ligand>
</feature>
<feature type="binding site" evidence="1">
    <location>
        <begin position="479"/>
        <end position="481"/>
    </location>
    <ligand>
        <name>ATP</name>
        <dbReference type="ChEBI" id="CHEBI:30616"/>
    </ligand>
</feature>
<feature type="binding site" evidence="1">
    <location>
        <position position="495"/>
    </location>
    <ligand>
        <name>ATP</name>
        <dbReference type="ChEBI" id="CHEBI:30616"/>
    </ligand>
</feature>
<evidence type="ECO:0000255" key="1">
    <source>
        <dbReference type="HAMAP-Rule" id="MF_00600"/>
    </source>
</evidence>
<accession>B5RMJ5</accession>
<sequence>MAKDIYFNEDARKSLLSGIEKLSNAVKVTLGPKGRNVLIDKKFGSPIVTKDGVSVAREIDLENSFENMGAQLLKEVAIKTNDLAGDGTTTATVLAYAIAREGLKNVSSGINPIGIKKGIDHAVALAAEKIRKSAKKITTKEEIAQVASISANNDTSIGEKIAEAMDRVGKDGVITVEESKTFDTTISYVEGMQFDRGYLSPYFSTNKENMSVSFDDTYILICEKKISTIKELLPVLEKVVNTNKPLLIIAEDIEGDALAALVLNSVRGALKVCAIKAPGFGDRRKAMLEDIAILTGGVLVSEELGLTLENVELEQLGQAKSVKVDKDNTTIINTGNREQIRERAELIKKQIEETSSEYDKEKLQERLAKLVGGVAVINVGAVTEVELKEKKHRVEDALSATRAAVEEGVVPGGGSTLIEVAMYLDTVDVSKLSYEEKQGFEIVKRSLEEPMRQIISNAGFESSIYIHQIKTDKKGLGFDAASFKWVNMIESGIIDPAKVTRSALQNAASIAGLLLTTECAITEIKEEKNSAGGNYPMDPGMGMM</sequence>
<gene>
    <name evidence="1" type="primary">groEL</name>
    <name evidence="1" type="synonym">groL</name>
    <name type="ordered locus">BDU_652</name>
</gene>
<name>CH60_BORDL</name>
<organism>
    <name type="scientific">Borrelia duttonii (strain Ly)</name>
    <dbReference type="NCBI Taxonomy" id="412419"/>
    <lineage>
        <taxon>Bacteria</taxon>
        <taxon>Pseudomonadati</taxon>
        <taxon>Spirochaetota</taxon>
        <taxon>Spirochaetia</taxon>
        <taxon>Spirochaetales</taxon>
        <taxon>Borreliaceae</taxon>
        <taxon>Borrelia</taxon>
    </lineage>
</organism>
<reference key="1">
    <citation type="journal article" date="2008" name="PLoS Genet.">
        <title>The genome of Borrelia recurrentis, the agent of deadly louse-borne relapsing fever, is a degraded subset of tick-borne Borrelia duttonii.</title>
        <authorList>
            <person name="Lescot M."/>
            <person name="Audic S."/>
            <person name="Robert C."/>
            <person name="Nguyen T.T."/>
            <person name="Blanc G."/>
            <person name="Cutler S.J."/>
            <person name="Wincker P."/>
            <person name="Couloux A."/>
            <person name="Claverie J.-M."/>
            <person name="Raoult D."/>
            <person name="Drancourt M."/>
        </authorList>
    </citation>
    <scope>NUCLEOTIDE SEQUENCE [LARGE SCALE GENOMIC DNA]</scope>
    <source>
        <strain>Ly</strain>
    </source>
</reference>
<keyword id="KW-0067">ATP-binding</keyword>
<keyword id="KW-0143">Chaperone</keyword>
<keyword id="KW-0963">Cytoplasm</keyword>
<keyword id="KW-0413">Isomerase</keyword>
<keyword id="KW-0547">Nucleotide-binding</keyword>
<keyword id="KW-0346">Stress response</keyword>
<proteinExistence type="inferred from homology"/>
<protein>
    <recommendedName>
        <fullName evidence="1">Chaperonin GroEL</fullName>
        <ecNumber evidence="1">5.6.1.7</ecNumber>
    </recommendedName>
    <alternativeName>
        <fullName evidence="1">60 kDa chaperonin</fullName>
    </alternativeName>
    <alternativeName>
        <fullName evidence="1">Chaperonin-60</fullName>
        <shortName evidence="1">Cpn60</shortName>
    </alternativeName>
</protein>
<dbReference type="EC" id="5.6.1.7" evidence="1"/>
<dbReference type="EMBL" id="CP000976">
    <property type="protein sequence ID" value="ACH93581.1"/>
    <property type="molecule type" value="Genomic_DNA"/>
</dbReference>
<dbReference type="RefSeq" id="WP_012538390.1">
    <property type="nucleotide sequence ID" value="NC_011229.1"/>
</dbReference>
<dbReference type="SMR" id="B5RMJ5"/>
<dbReference type="STRING" id="412419.BDU_652"/>
<dbReference type="KEGG" id="bdu:BDU_652"/>
<dbReference type="eggNOG" id="COG0459">
    <property type="taxonomic scope" value="Bacteria"/>
</dbReference>
<dbReference type="HOGENOM" id="CLU_016503_3_0_12"/>
<dbReference type="OrthoDB" id="9766614at2"/>
<dbReference type="Proteomes" id="UP000000611">
    <property type="component" value="Chromosome"/>
</dbReference>
<dbReference type="GO" id="GO:0005737">
    <property type="term" value="C:cytoplasm"/>
    <property type="evidence" value="ECO:0007669"/>
    <property type="project" value="UniProtKB-SubCell"/>
</dbReference>
<dbReference type="GO" id="GO:0005524">
    <property type="term" value="F:ATP binding"/>
    <property type="evidence" value="ECO:0007669"/>
    <property type="project" value="UniProtKB-UniRule"/>
</dbReference>
<dbReference type="GO" id="GO:0140662">
    <property type="term" value="F:ATP-dependent protein folding chaperone"/>
    <property type="evidence" value="ECO:0007669"/>
    <property type="project" value="InterPro"/>
</dbReference>
<dbReference type="GO" id="GO:0016853">
    <property type="term" value="F:isomerase activity"/>
    <property type="evidence" value="ECO:0007669"/>
    <property type="project" value="UniProtKB-KW"/>
</dbReference>
<dbReference type="GO" id="GO:0051082">
    <property type="term" value="F:unfolded protein binding"/>
    <property type="evidence" value="ECO:0007669"/>
    <property type="project" value="UniProtKB-UniRule"/>
</dbReference>
<dbReference type="GO" id="GO:0042026">
    <property type="term" value="P:protein refolding"/>
    <property type="evidence" value="ECO:0007669"/>
    <property type="project" value="UniProtKB-UniRule"/>
</dbReference>
<dbReference type="CDD" id="cd03344">
    <property type="entry name" value="GroEL"/>
    <property type="match status" value="1"/>
</dbReference>
<dbReference type="FunFam" id="3.50.7.10:FF:000001">
    <property type="entry name" value="60 kDa chaperonin"/>
    <property type="match status" value="1"/>
</dbReference>
<dbReference type="Gene3D" id="3.50.7.10">
    <property type="entry name" value="GroEL"/>
    <property type="match status" value="1"/>
</dbReference>
<dbReference type="Gene3D" id="1.10.560.10">
    <property type="entry name" value="GroEL-like equatorial domain"/>
    <property type="match status" value="1"/>
</dbReference>
<dbReference type="Gene3D" id="3.30.260.10">
    <property type="entry name" value="TCP-1-like chaperonin intermediate domain"/>
    <property type="match status" value="1"/>
</dbReference>
<dbReference type="HAMAP" id="MF_00600">
    <property type="entry name" value="CH60"/>
    <property type="match status" value="1"/>
</dbReference>
<dbReference type="InterPro" id="IPR018370">
    <property type="entry name" value="Chaperonin_Cpn60_CS"/>
</dbReference>
<dbReference type="InterPro" id="IPR001844">
    <property type="entry name" value="Cpn60/GroEL"/>
</dbReference>
<dbReference type="InterPro" id="IPR002423">
    <property type="entry name" value="Cpn60/GroEL/TCP-1"/>
</dbReference>
<dbReference type="InterPro" id="IPR027409">
    <property type="entry name" value="GroEL-like_apical_dom_sf"/>
</dbReference>
<dbReference type="InterPro" id="IPR027413">
    <property type="entry name" value="GROEL-like_equatorial_sf"/>
</dbReference>
<dbReference type="InterPro" id="IPR027410">
    <property type="entry name" value="TCP-1-like_intermed_sf"/>
</dbReference>
<dbReference type="NCBIfam" id="TIGR02348">
    <property type="entry name" value="GroEL"/>
    <property type="match status" value="1"/>
</dbReference>
<dbReference type="NCBIfam" id="NF000592">
    <property type="entry name" value="PRK00013.1"/>
    <property type="match status" value="1"/>
</dbReference>
<dbReference type="NCBIfam" id="NF009487">
    <property type="entry name" value="PRK12849.1"/>
    <property type="match status" value="1"/>
</dbReference>
<dbReference type="NCBIfam" id="NF009488">
    <property type="entry name" value="PRK12850.1"/>
    <property type="match status" value="1"/>
</dbReference>
<dbReference type="NCBIfam" id="NF009489">
    <property type="entry name" value="PRK12851.1"/>
    <property type="match status" value="1"/>
</dbReference>
<dbReference type="PANTHER" id="PTHR45633">
    <property type="entry name" value="60 KDA HEAT SHOCK PROTEIN, MITOCHONDRIAL"/>
    <property type="match status" value="1"/>
</dbReference>
<dbReference type="Pfam" id="PF00118">
    <property type="entry name" value="Cpn60_TCP1"/>
    <property type="match status" value="1"/>
</dbReference>
<dbReference type="PRINTS" id="PR00298">
    <property type="entry name" value="CHAPERONIN60"/>
</dbReference>
<dbReference type="SUPFAM" id="SSF52029">
    <property type="entry name" value="GroEL apical domain-like"/>
    <property type="match status" value="1"/>
</dbReference>
<dbReference type="SUPFAM" id="SSF48592">
    <property type="entry name" value="GroEL equatorial domain-like"/>
    <property type="match status" value="1"/>
</dbReference>
<dbReference type="SUPFAM" id="SSF54849">
    <property type="entry name" value="GroEL-intermediate domain like"/>
    <property type="match status" value="1"/>
</dbReference>
<dbReference type="PROSITE" id="PS00296">
    <property type="entry name" value="CHAPERONINS_CPN60"/>
    <property type="match status" value="1"/>
</dbReference>